<proteinExistence type="predicted"/>
<name>Y1736_HAEIN</name>
<dbReference type="EMBL" id="L42023">
    <property type="protein sequence ID" value="AAC23384.1"/>
    <property type="molecule type" value="Genomic_DNA"/>
</dbReference>
<dbReference type="PIR" id="D64041">
    <property type="entry name" value="D64041"/>
</dbReference>
<dbReference type="RefSeq" id="NP_439878.1">
    <property type="nucleotide sequence ID" value="NC_000907.1"/>
</dbReference>
<dbReference type="SMR" id="P44300"/>
<dbReference type="STRING" id="71421.HI_1736"/>
<dbReference type="EnsemblBacteria" id="AAC23384">
    <property type="protein sequence ID" value="AAC23384"/>
    <property type="gene ID" value="HI_1736"/>
</dbReference>
<dbReference type="KEGG" id="hin:HI_1736"/>
<dbReference type="PATRIC" id="fig|71421.8.peg.1817"/>
<dbReference type="eggNOG" id="ENOG5032YVH">
    <property type="taxonomic scope" value="Bacteria"/>
</dbReference>
<dbReference type="HOGENOM" id="CLU_179405_1_1_6"/>
<dbReference type="OrthoDB" id="677174at2"/>
<dbReference type="PhylomeDB" id="P44300"/>
<dbReference type="BioCyc" id="HINF71421:G1GJ1-1752-MONOMER"/>
<dbReference type="Proteomes" id="UP000000579">
    <property type="component" value="Chromosome"/>
</dbReference>
<dbReference type="GO" id="GO:0005886">
    <property type="term" value="C:plasma membrane"/>
    <property type="evidence" value="ECO:0007669"/>
    <property type="project" value="UniProtKB-SubCell"/>
</dbReference>
<dbReference type="InterPro" id="IPR019629">
    <property type="entry name" value="Uncharacterised_HI1736/YgjV"/>
</dbReference>
<dbReference type="Pfam" id="PF10688">
    <property type="entry name" value="Imp-YgjV"/>
    <property type="match status" value="1"/>
</dbReference>
<evidence type="ECO:0000255" key="1"/>
<evidence type="ECO:0000305" key="2"/>
<organism>
    <name type="scientific">Haemophilus influenzae (strain ATCC 51907 / DSM 11121 / KW20 / Rd)</name>
    <dbReference type="NCBI Taxonomy" id="71421"/>
    <lineage>
        <taxon>Bacteria</taxon>
        <taxon>Pseudomonadati</taxon>
        <taxon>Pseudomonadota</taxon>
        <taxon>Gammaproteobacteria</taxon>
        <taxon>Pasteurellales</taxon>
        <taxon>Pasteurellaceae</taxon>
        <taxon>Haemophilus</taxon>
    </lineage>
</organism>
<protein>
    <recommendedName>
        <fullName>Uncharacterized protein HI_1736</fullName>
    </recommendedName>
</protein>
<sequence length="77" mass="8881">MDFNFIEFLGYMATFFVAASFLFKSIVHLRIVNSIGAILFVIYSLIITAYPVALLNAFLVVVNIYQLWRLKQENLSK</sequence>
<reference key="1">
    <citation type="journal article" date="1995" name="Science">
        <title>Whole-genome random sequencing and assembly of Haemophilus influenzae Rd.</title>
        <authorList>
            <person name="Fleischmann R.D."/>
            <person name="Adams M.D."/>
            <person name="White O."/>
            <person name="Clayton R.A."/>
            <person name="Kirkness E.F."/>
            <person name="Kerlavage A.R."/>
            <person name="Bult C.J."/>
            <person name="Tomb J.-F."/>
            <person name="Dougherty B.A."/>
            <person name="Merrick J.M."/>
            <person name="McKenney K."/>
            <person name="Sutton G.G."/>
            <person name="FitzHugh W."/>
            <person name="Fields C.A."/>
            <person name="Gocayne J.D."/>
            <person name="Scott J.D."/>
            <person name="Shirley R."/>
            <person name="Liu L.-I."/>
            <person name="Glodek A."/>
            <person name="Kelley J.M."/>
            <person name="Weidman J.F."/>
            <person name="Phillips C.A."/>
            <person name="Spriggs T."/>
            <person name="Hedblom E."/>
            <person name="Cotton M.D."/>
            <person name="Utterback T.R."/>
            <person name="Hanna M.C."/>
            <person name="Nguyen D.T."/>
            <person name="Saudek D.M."/>
            <person name="Brandon R.C."/>
            <person name="Fine L.D."/>
            <person name="Fritchman J.L."/>
            <person name="Fuhrmann J.L."/>
            <person name="Geoghagen N.S.M."/>
            <person name="Gnehm C.L."/>
            <person name="McDonald L.A."/>
            <person name="Small K.V."/>
            <person name="Fraser C.M."/>
            <person name="Smith H.O."/>
            <person name="Venter J.C."/>
        </authorList>
    </citation>
    <scope>NUCLEOTIDE SEQUENCE [LARGE SCALE GENOMIC DNA]</scope>
    <source>
        <strain>ATCC 51907 / DSM 11121 / KW20 / Rd</strain>
    </source>
</reference>
<gene>
    <name type="ordered locus">HI_1736</name>
</gene>
<accession>P44300</accession>
<feature type="chain" id="PRO_0000078111" description="Uncharacterized protein HI_1736">
    <location>
        <begin position="1"/>
        <end position="77"/>
    </location>
</feature>
<feature type="transmembrane region" description="Helical" evidence="1">
    <location>
        <begin position="3"/>
        <end position="23"/>
    </location>
</feature>
<feature type="transmembrane region" description="Helical" evidence="1">
    <location>
        <begin position="35"/>
        <end position="55"/>
    </location>
</feature>
<keyword id="KW-1003">Cell membrane</keyword>
<keyword id="KW-0472">Membrane</keyword>
<keyword id="KW-1185">Reference proteome</keyword>
<keyword id="KW-0812">Transmembrane</keyword>
<keyword id="KW-1133">Transmembrane helix</keyword>
<comment type="subcellular location">
    <subcellularLocation>
        <location evidence="2">Cell membrane</location>
        <topology evidence="2">Multi-pass membrane protein</topology>
    </subcellularLocation>
</comment>